<organism>
    <name type="scientific">Shigella boydii serotype 4 (strain Sb227)</name>
    <dbReference type="NCBI Taxonomy" id="300268"/>
    <lineage>
        <taxon>Bacteria</taxon>
        <taxon>Pseudomonadati</taxon>
        <taxon>Pseudomonadota</taxon>
        <taxon>Gammaproteobacteria</taxon>
        <taxon>Enterobacterales</taxon>
        <taxon>Enterobacteriaceae</taxon>
        <taxon>Shigella</taxon>
    </lineage>
</organism>
<sequence length="264" mass="28137">MKPTTIASLQKCKQDKKRFATITAYDYSFAKLFADEGLNVMLVGDSLGMTVQGHDSTLPVTVADIAYHTASVRRGAPNCLLLADLPFMAYATPEQAFENAATVMRAGANMVKIEGGEWLVETVKMLTERAVPVCGHLGLTPQSVNIFGGYKVQGRGDEAGDQLLSDALALEAAGAQLLVLECVPVELAKRITEALAIPVIGIGAGNVTDGQILVMHDAFGITGGHIPKFAKNFLAETGDIRAAVRQYMAEVESGVYPGEEHSFH</sequence>
<proteinExistence type="inferred from homology"/>
<feature type="chain" id="PRO_0000297375" description="3-methyl-2-oxobutanoate hydroxymethyltransferase">
    <location>
        <begin position="1"/>
        <end position="264"/>
    </location>
</feature>
<feature type="active site" description="Proton acceptor" evidence="1">
    <location>
        <position position="181"/>
    </location>
</feature>
<feature type="binding site" evidence="1">
    <location>
        <begin position="45"/>
        <end position="46"/>
    </location>
    <ligand>
        <name>3-methyl-2-oxobutanoate</name>
        <dbReference type="ChEBI" id="CHEBI:11851"/>
    </ligand>
</feature>
<feature type="binding site" evidence="1">
    <location>
        <position position="45"/>
    </location>
    <ligand>
        <name>Mg(2+)</name>
        <dbReference type="ChEBI" id="CHEBI:18420"/>
    </ligand>
</feature>
<feature type="binding site" evidence="1">
    <location>
        <position position="84"/>
    </location>
    <ligand>
        <name>3-methyl-2-oxobutanoate</name>
        <dbReference type="ChEBI" id="CHEBI:11851"/>
    </ligand>
</feature>
<feature type="binding site" evidence="1">
    <location>
        <position position="84"/>
    </location>
    <ligand>
        <name>Mg(2+)</name>
        <dbReference type="ChEBI" id="CHEBI:18420"/>
    </ligand>
</feature>
<feature type="binding site" evidence="1">
    <location>
        <position position="112"/>
    </location>
    <ligand>
        <name>3-methyl-2-oxobutanoate</name>
        <dbReference type="ChEBI" id="CHEBI:11851"/>
    </ligand>
</feature>
<feature type="binding site" evidence="1">
    <location>
        <position position="114"/>
    </location>
    <ligand>
        <name>Mg(2+)</name>
        <dbReference type="ChEBI" id="CHEBI:18420"/>
    </ligand>
</feature>
<dbReference type="EC" id="2.1.2.11" evidence="1"/>
<dbReference type="EMBL" id="CP000036">
    <property type="protein sequence ID" value="ABB64855.1"/>
    <property type="molecule type" value="Genomic_DNA"/>
</dbReference>
<dbReference type="RefSeq" id="WP_000805451.1">
    <property type="nucleotide sequence ID" value="NC_007613.1"/>
</dbReference>
<dbReference type="SMR" id="Q326A3"/>
<dbReference type="KEGG" id="sbo:SBO_0123"/>
<dbReference type="HOGENOM" id="CLU_036645_1_0_6"/>
<dbReference type="UniPathway" id="UPA00028">
    <property type="reaction ID" value="UER00003"/>
</dbReference>
<dbReference type="Proteomes" id="UP000007067">
    <property type="component" value="Chromosome"/>
</dbReference>
<dbReference type="GO" id="GO:0005737">
    <property type="term" value="C:cytoplasm"/>
    <property type="evidence" value="ECO:0007669"/>
    <property type="project" value="UniProtKB-SubCell"/>
</dbReference>
<dbReference type="GO" id="GO:0003864">
    <property type="term" value="F:3-methyl-2-oxobutanoate hydroxymethyltransferase activity"/>
    <property type="evidence" value="ECO:0007669"/>
    <property type="project" value="UniProtKB-UniRule"/>
</dbReference>
<dbReference type="GO" id="GO:0000287">
    <property type="term" value="F:magnesium ion binding"/>
    <property type="evidence" value="ECO:0007669"/>
    <property type="project" value="TreeGrafter"/>
</dbReference>
<dbReference type="GO" id="GO:0015940">
    <property type="term" value="P:pantothenate biosynthetic process"/>
    <property type="evidence" value="ECO:0007669"/>
    <property type="project" value="UniProtKB-UniRule"/>
</dbReference>
<dbReference type="CDD" id="cd06557">
    <property type="entry name" value="KPHMT-like"/>
    <property type="match status" value="1"/>
</dbReference>
<dbReference type="FunFam" id="3.20.20.60:FF:000003">
    <property type="entry name" value="3-methyl-2-oxobutanoate hydroxymethyltransferase"/>
    <property type="match status" value="1"/>
</dbReference>
<dbReference type="Gene3D" id="3.20.20.60">
    <property type="entry name" value="Phosphoenolpyruvate-binding domains"/>
    <property type="match status" value="1"/>
</dbReference>
<dbReference type="HAMAP" id="MF_00156">
    <property type="entry name" value="PanB"/>
    <property type="match status" value="1"/>
</dbReference>
<dbReference type="InterPro" id="IPR003700">
    <property type="entry name" value="Pantoate_hydroxy_MeTrfase"/>
</dbReference>
<dbReference type="InterPro" id="IPR015813">
    <property type="entry name" value="Pyrv/PenolPyrv_kinase-like_dom"/>
</dbReference>
<dbReference type="InterPro" id="IPR040442">
    <property type="entry name" value="Pyrv_kinase-like_dom_sf"/>
</dbReference>
<dbReference type="NCBIfam" id="TIGR00222">
    <property type="entry name" value="panB"/>
    <property type="match status" value="1"/>
</dbReference>
<dbReference type="NCBIfam" id="NF001452">
    <property type="entry name" value="PRK00311.1"/>
    <property type="match status" value="1"/>
</dbReference>
<dbReference type="PANTHER" id="PTHR20881">
    <property type="entry name" value="3-METHYL-2-OXOBUTANOATE HYDROXYMETHYLTRANSFERASE"/>
    <property type="match status" value="1"/>
</dbReference>
<dbReference type="PANTHER" id="PTHR20881:SF0">
    <property type="entry name" value="3-METHYL-2-OXOBUTANOATE HYDROXYMETHYLTRANSFERASE"/>
    <property type="match status" value="1"/>
</dbReference>
<dbReference type="Pfam" id="PF02548">
    <property type="entry name" value="Pantoate_transf"/>
    <property type="match status" value="1"/>
</dbReference>
<dbReference type="PIRSF" id="PIRSF000388">
    <property type="entry name" value="Pantoate_hydroxy_MeTrfase"/>
    <property type="match status" value="1"/>
</dbReference>
<dbReference type="SUPFAM" id="SSF51621">
    <property type="entry name" value="Phosphoenolpyruvate/pyruvate domain"/>
    <property type="match status" value="1"/>
</dbReference>
<reference key="1">
    <citation type="journal article" date="2005" name="Nucleic Acids Res.">
        <title>Genome dynamics and diversity of Shigella species, the etiologic agents of bacillary dysentery.</title>
        <authorList>
            <person name="Yang F."/>
            <person name="Yang J."/>
            <person name="Zhang X."/>
            <person name="Chen L."/>
            <person name="Jiang Y."/>
            <person name="Yan Y."/>
            <person name="Tang X."/>
            <person name="Wang J."/>
            <person name="Xiong Z."/>
            <person name="Dong J."/>
            <person name="Xue Y."/>
            <person name="Zhu Y."/>
            <person name="Xu X."/>
            <person name="Sun L."/>
            <person name="Chen S."/>
            <person name="Nie H."/>
            <person name="Peng J."/>
            <person name="Xu J."/>
            <person name="Wang Y."/>
            <person name="Yuan Z."/>
            <person name="Wen Y."/>
            <person name="Yao Z."/>
            <person name="Shen Y."/>
            <person name="Qiang B."/>
            <person name="Hou Y."/>
            <person name="Yu J."/>
            <person name="Jin Q."/>
        </authorList>
    </citation>
    <scope>NUCLEOTIDE SEQUENCE [LARGE SCALE GENOMIC DNA]</scope>
    <source>
        <strain>Sb227</strain>
    </source>
</reference>
<protein>
    <recommendedName>
        <fullName evidence="1">3-methyl-2-oxobutanoate hydroxymethyltransferase</fullName>
        <ecNumber evidence="1">2.1.2.11</ecNumber>
    </recommendedName>
    <alternativeName>
        <fullName evidence="1">Ketopantoate hydroxymethyltransferase</fullName>
        <shortName evidence="1">KPHMT</shortName>
    </alternativeName>
</protein>
<gene>
    <name evidence="1" type="primary">panB</name>
    <name type="ordered locus">SBO_0123</name>
</gene>
<comment type="function">
    <text evidence="1">Catalyzes the reversible reaction in which hydroxymethyl group from 5,10-methylenetetrahydrofolate is transferred onto alpha-ketoisovalerate to form ketopantoate.</text>
</comment>
<comment type="catalytic activity">
    <reaction evidence="1">
        <text>3-methyl-2-oxobutanoate + (6R)-5,10-methylene-5,6,7,8-tetrahydrofolate + H2O = 2-dehydropantoate + (6S)-5,6,7,8-tetrahydrofolate</text>
        <dbReference type="Rhea" id="RHEA:11824"/>
        <dbReference type="ChEBI" id="CHEBI:11561"/>
        <dbReference type="ChEBI" id="CHEBI:11851"/>
        <dbReference type="ChEBI" id="CHEBI:15377"/>
        <dbReference type="ChEBI" id="CHEBI:15636"/>
        <dbReference type="ChEBI" id="CHEBI:57453"/>
        <dbReference type="EC" id="2.1.2.11"/>
    </reaction>
</comment>
<comment type="cofactor">
    <cofactor evidence="1">
        <name>Mg(2+)</name>
        <dbReference type="ChEBI" id="CHEBI:18420"/>
    </cofactor>
    <text evidence="1">Binds 1 Mg(2+) ion per subunit.</text>
</comment>
<comment type="pathway">
    <text evidence="1">Cofactor biosynthesis; (R)-pantothenate biosynthesis; (R)-pantoate from 3-methyl-2-oxobutanoate: step 1/2.</text>
</comment>
<comment type="subunit">
    <text evidence="1">Homodecamer; pentamer of dimers.</text>
</comment>
<comment type="subcellular location">
    <subcellularLocation>
        <location evidence="1">Cytoplasm</location>
    </subcellularLocation>
</comment>
<comment type="similarity">
    <text evidence="1">Belongs to the PanB family.</text>
</comment>
<keyword id="KW-0963">Cytoplasm</keyword>
<keyword id="KW-0460">Magnesium</keyword>
<keyword id="KW-0479">Metal-binding</keyword>
<keyword id="KW-0566">Pantothenate biosynthesis</keyword>
<keyword id="KW-0808">Transferase</keyword>
<evidence type="ECO:0000255" key="1">
    <source>
        <dbReference type="HAMAP-Rule" id="MF_00156"/>
    </source>
</evidence>
<name>PANB_SHIBS</name>
<accession>Q326A3</accession>